<gene>
    <name evidence="1" type="primary">ilvC</name>
    <name type="ordered locus">Gmet_1262</name>
</gene>
<comment type="function">
    <text evidence="1">Involved in the biosynthesis of branched-chain amino acids (BCAA). Catalyzes an alkyl-migration followed by a ketol-acid reduction of (S)-2-acetolactate (S2AL) to yield (R)-2,3-dihydroxy-isovalerate. In the isomerase reaction, S2AL is rearranged via a Mg-dependent methyl migration to produce 3-hydroxy-3-methyl-2-ketobutyrate (HMKB). In the reductase reaction, this 2-ketoacid undergoes a metal-dependent reduction by NADPH to yield (R)-2,3-dihydroxy-isovalerate.</text>
</comment>
<comment type="catalytic activity">
    <reaction evidence="1">
        <text>(2R)-2,3-dihydroxy-3-methylbutanoate + NADP(+) = (2S)-2-acetolactate + NADPH + H(+)</text>
        <dbReference type="Rhea" id="RHEA:22068"/>
        <dbReference type="ChEBI" id="CHEBI:15378"/>
        <dbReference type="ChEBI" id="CHEBI:49072"/>
        <dbReference type="ChEBI" id="CHEBI:57783"/>
        <dbReference type="ChEBI" id="CHEBI:58349"/>
        <dbReference type="ChEBI" id="CHEBI:58476"/>
        <dbReference type="EC" id="1.1.1.86"/>
    </reaction>
</comment>
<comment type="catalytic activity">
    <reaction evidence="1">
        <text>(2R,3R)-2,3-dihydroxy-3-methylpentanoate + NADP(+) = (S)-2-ethyl-2-hydroxy-3-oxobutanoate + NADPH + H(+)</text>
        <dbReference type="Rhea" id="RHEA:13493"/>
        <dbReference type="ChEBI" id="CHEBI:15378"/>
        <dbReference type="ChEBI" id="CHEBI:49256"/>
        <dbReference type="ChEBI" id="CHEBI:49258"/>
        <dbReference type="ChEBI" id="CHEBI:57783"/>
        <dbReference type="ChEBI" id="CHEBI:58349"/>
        <dbReference type="EC" id="1.1.1.86"/>
    </reaction>
</comment>
<comment type="cofactor">
    <cofactor evidence="1">
        <name>Mg(2+)</name>
        <dbReference type="ChEBI" id="CHEBI:18420"/>
    </cofactor>
    <text evidence="1">Binds 2 magnesium ions per subunit.</text>
</comment>
<comment type="pathway">
    <text evidence="1">Amino-acid biosynthesis; L-isoleucine biosynthesis; L-isoleucine from 2-oxobutanoate: step 2/4.</text>
</comment>
<comment type="pathway">
    <text evidence="1">Amino-acid biosynthesis; L-valine biosynthesis; L-valine from pyruvate: step 2/4.</text>
</comment>
<comment type="similarity">
    <text evidence="1">Belongs to the ketol-acid reductoisomerase family.</text>
</comment>
<keyword id="KW-0028">Amino-acid biosynthesis</keyword>
<keyword id="KW-0100">Branched-chain amino acid biosynthesis</keyword>
<keyword id="KW-0460">Magnesium</keyword>
<keyword id="KW-0479">Metal-binding</keyword>
<keyword id="KW-0521">NADP</keyword>
<keyword id="KW-0560">Oxidoreductase</keyword>
<keyword id="KW-1185">Reference proteome</keyword>
<dbReference type="EC" id="1.1.1.86" evidence="1"/>
<dbReference type="EMBL" id="CP000148">
    <property type="protein sequence ID" value="ABB31498.1"/>
    <property type="molecule type" value="Genomic_DNA"/>
</dbReference>
<dbReference type="RefSeq" id="WP_004512105.1">
    <property type="nucleotide sequence ID" value="NC_007517.1"/>
</dbReference>
<dbReference type="SMR" id="Q39W76"/>
<dbReference type="STRING" id="269799.Gmet_1262"/>
<dbReference type="KEGG" id="gme:Gmet_1262"/>
<dbReference type="eggNOG" id="COG0059">
    <property type="taxonomic scope" value="Bacteria"/>
</dbReference>
<dbReference type="HOGENOM" id="CLU_033821_0_1_7"/>
<dbReference type="UniPathway" id="UPA00047">
    <property type="reaction ID" value="UER00056"/>
</dbReference>
<dbReference type="UniPathway" id="UPA00049">
    <property type="reaction ID" value="UER00060"/>
</dbReference>
<dbReference type="Proteomes" id="UP000007073">
    <property type="component" value="Chromosome"/>
</dbReference>
<dbReference type="GO" id="GO:0005829">
    <property type="term" value="C:cytosol"/>
    <property type="evidence" value="ECO:0007669"/>
    <property type="project" value="TreeGrafter"/>
</dbReference>
<dbReference type="GO" id="GO:0004455">
    <property type="term" value="F:ketol-acid reductoisomerase activity"/>
    <property type="evidence" value="ECO:0007669"/>
    <property type="project" value="UniProtKB-UniRule"/>
</dbReference>
<dbReference type="GO" id="GO:0000287">
    <property type="term" value="F:magnesium ion binding"/>
    <property type="evidence" value="ECO:0007669"/>
    <property type="project" value="UniProtKB-UniRule"/>
</dbReference>
<dbReference type="GO" id="GO:0050661">
    <property type="term" value="F:NADP binding"/>
    <property type="evidence" value="ECO:0007669"/>
    <property type="project" value="InterPro"/>
</dbReference>
<dbReference type="GO" id="GO:0009097">
    <property type="term" value="P:isoleucine biosynthetic process"/>
    <property type="evidence" value="ECO:0007669"/>
    <property type="project" value="UniProtKB-UniRule"/>
</dbReference>
<dbReference type="GO" id="GO:0009099">
    <property type="term" value="P:L-valine biosynthetic process"/>
    <property type="evidence" value="ECO:0007669"/>
    <property type="project" value="UniProtKB-UniRule"/>
</dbReference>
<dbReference type="FunFam" id="3.40.50.720:FF:000023">
    <property type="entry name" value="Ketol-acid reductoisomerase (NADP(+))"/>
    <property type="match status" value="1"/>
</dbReference>
<dbReference type="Gene3D" id="6.10.240.10">
    <property type="match status" value="1"/>
</dbReference>
<dbReference type="Gene3D" id="3.40.50.720">
    <property type="entry name" value="NAD(P)-binding Rossmann-like Domain"/>
    <property type="match status" value="1"/>
</dbReference>
<dbReference type="HAMAP" id="MF_00435">
    <property type="entry name" value="IlvC"/>
    <property type="match status" value="1"/>
</dbReference>
<dbReference type="InterPro" id="IPR008927">
    <property type="entry name" value="6-PGluconate_DH-like_C_sf"/>
</dbReference>
<dbReference type="InterPro" id="IPR013023">
    <property type="entry name" value="KARI"/>
</dbReference>
<dbReference type="InterPro" id="IPR000506">
    <property type="entry name" value="KARI_C"/>
</dbReference>
<dbReference type="InterPro" id="IPR013116">
    <property type="entry name" value="KARI_N"/>
</dbReference>
<dbReference type="InterPro" id="IPR014359">
    <property type="entry name" value="KARI_prok"/>
</dbReference>
<dbReference type="InterPro" id="IPR036291">
    <property type="entry name" value="NAD(P)-bd_dom_sf"/>
</dbReference>
<dbReference type="NCBIfam" id="TIGR00465">
    <property type="entry name" value="ilvC"/>
    <property type="match status" value="1"/>
</dbReference>
<dbReference type="NCBIfam" id="NF004017">
    <property type="entry name" value="PRK05479.1"/>
    <property type="match status" value="1"/>
</dbReference>
<dbReference type="NCBIfam" id="NF009940">
    <property type="entry name" value="PRK13403.1"/>
    <property type="match status" value="1"/>
</dbReference>
<dbReference type="PANTHER" id="PTHR21371">
    <property type="entry name" value="KETOL-ACID REDUCTOISOMERASE, MITOCHONDRIAL"/>
    <property type="match status" value="1"/>
</dbReference>
<dbReference type="PANTHER" id="PTHR21371:SF1">
    <property type="entry name" value="KETOL-ACID REDUCTOISOMERASE, MITOCHONDRIAL"/>
    <property type="match status" value="1"/>
</dbReference>
<dbReference type="Pfam" id="PF01450">
    <property type="entry name" value="KARI_C"/>
    <property type="match status" value="1"/>
</dbReference>
<dbReference type="Pfam" id="PF07991">
    <property type="entry name" value="KARI_N"/>
    <property type="match status" value="1"/>
</dbReference>
<dbReference type="PIRSF" id="PIRSF000116">
    <property type="entry name" value="IlvC_gammaproteo"/>
    <property type="match status" value="1"/>
</dbReference>
<dbReference type="SUPFAM" id="SSF48179">
    <property type="entry name" value="6-phosphogluconate dehydrogenase C-terminal domain-like"/>
    <property type="match status" value="1"/>
</dbReference>
<dbReference type="SUPFAM" id="SSF51735">
    <property type="entry name" value="NAD(P)-binding Rossmann-fold domains"/>
    <property type="match status" value="1"/>
</dbReference>
<dbReference type="PROSITE" id="PS51851">
    <property type="entry name" value="KARI_C"/>
    <property type="match status" value="1"/>
</dbReference>
<dbReference type="PROSITE" id="PS51850">
    <property type="entry name" value="KARI_N"/>
    <property type="match status" value="1"/>
</dbReference>
<evidence type="ECO:0000255" key="1">
    <source>
        <dbReference type="HAMAP-Rule" id="MF_00435"/>
    </source>
</evidence>
<evidence type="ECO:0000255" key="2">
    <source>
        <dbReference type="PROSITE-ProRule" id="PRU01197"/>
    </source>
</evidence>
<evidence type="ECO:0000255" key="3">
    <source>
        <dbReference type="PROSITE-ProRule" id="PRU01198"/>
    </source>
</evidence>
<feature type="chain" id="PRO_0000252761" description="Ketol-acid reductoisomerase (NADP(+))">
    <location>
        <begin position="1"/>
        <end position="338"/>
    </location>
</feature>
<feature type="domain" description="KARI N-terminal Rossmann" evidence="2">
    <location>
        <begin position="1"/>
        <end position="181"/>
    </location>
</feature>
<feature type="domain" description="KARI C-terminal knotted" evidence="3">
    <location>
        <begin position="182"/>
        <end position="327"/>
    </location>
</feature>
<feature type="active site" evidence="1">
    <location>
        <position position="107"/>
    </location>
</feature>
<feature type="binding site" evidence="1">
    <location>
        <begin position="24"/>
        <end position="27"/>
    </location>
    <ligand>
        <name>NADP(+)</name>
        <dbReference type="ChEBI" id="CHEBI:58349"/>
    </ligand>
</feature>
<feature type="binding site" evidence="1">
    <location>
        <position position="47"/>
    </location>
    <ligand>
        <name>NADP(+)</name>
        <dbReference type="ChEBI" id="CHEBI:58349"/>
    </ligand>
</feature>
<feature type="binding site" evidence="1">
    <location>
        <position position="50"/>
    </location>
    <ligand>
        <name>NADP(+)</name>
        <dbReference type="ChEBI" id="CHEBI:58349"/>
    </ligand>
</feature>
<feature type="binding site" evidence="1">
    <location>
        <position position="52"/>
    </location>
    <ligand>
        <name>NADP(+)</name>
        <dbReference type="ChEBI" id="CHEBI:58349"/>
    </ligand>
</feature>
<feature type="binding site" evidence="1">
    <location>
        <begin position="82"/>
        <end position="85"/>
    </location>
    <ligand>
        <name>NADP(+)</name>
        <dbReference type="ChEBI" id="CHEBI:58349"/>
    </ligand>
</feature>
<feature type="binding site" evidence="1">
    <location>
        <position position="133"/>
    </location>
    <ligand>
        <name>NADP(+)</name>
        <dbReference type="ChEBI" id="CHEBI:58349"/>
    </ligand>
</feature>
<feature type="binding site" evidence="1">
    <location>
        <position position="190"/>
    </location>
    <ligand>
        <name>Mg(2+)</name>
        <dbReference type="ChEBI" id="CHEBI:18420"/>
        <label>1</label>
    </ligand>
</feature>
<feature type="binding site" evidence="1">
    <location>
        <position position="190"/>
    </location>
    <ligand>
        <name>Mg(2+)</name>
        <dbReference type="ChEBI" id="CHEBI:18420"/>
        <label>2</label>
    </ligand>
</feature>
<feature type="binding site" evidence="1">
    <location>
        <position position="194"/>
    </location>
    <ligand>
        <name>Mg(2+)</name>
        <dbReference type="ChEBI" id="CHEBI:18420"/>
        <label>1</label>
    </ligand>
</feature>
<feature type="binding site" evidence="1">
    <location>
        <position position="226"/>
    </location>
    <ligand>
        <name>Mg(2+)</name>
        <dbReference type="ChEBI" id="CHEBI:18420"/>
        <label>2</label>
    </ligand>
</feature>
<feature type="binding site" evidence="1">
    <location>
        <position position="230"/>
    </location>
    <ligand>
        <name>Mg(2+)</name>
        <dbReference type="ChEBI" id="CHEBI:18420"/>
        <label>2</label>
    </ligand>
</feature>
<feature type="binding site" evidence="1">
    <location>
        <position position="251"/>
    </location>
    <ligand>
        <name>substrate</name>
    </ligand>
</feature>
<name>ILVC_GEOMG</name>
<reference key="1">
    <citation type="journal article" date="2009" name="BMC Microbiol.">
        <title>The genome sequence of Geobacter metallireducens: features of metabolism, physiology and regulation common and dissimilar to Geobacter sulfurreducens.</title>
        <authorList>
            <person name="Aklujkar M."/>
            <person name="Krushkal J."/>
            <person name="DiBartolo G."/>
            <person name="Lapidus A."/>
            <person name="Land M.L."/>
            <person name="Lovley D.R."/>
        </authorList>
    </citation>
    <scope>NUCLEOTIDE SEQUENCE [LARGE SCALE GENOMIC DNA]</scope>
    <source>
        <strain>ATCC 53774 / DSM 7210 / GS-15</strain>
    </source>
</reference>
<proteinExistence type="inferred from homology"/>
<accession>Q39W76</accession>
<organism>
    <name type="scientific">Geobacter metallireducens (strain ATCC 53774 / DSM 7210 / GS-15)</name>
    <dbReference type="NCBI Taxonomy" id="269799"/>
    <lineage>
        <taxon>Bacteria</taxon>
        <taxon>Pseudomonadati</taxon>
        <taxon>Thermodesulfobacteriota</taxon>
        <taxon>Desulfuromonadia</taxon>
        <taxon>Geobacterales</taxon>
        <taxon>Geobacteraceae</taxon>
        <taxon>Geobacter</taxon>
    </lineage>
</organism>
<protein>
    <recommendedName>
        <fullName evidence="1">Ketol-acid reductoisomerase (NADP(+))</fullName>
        <shortName evidence="1">KARI</shortName>
        <ecNumber evidence="1">1.1.1.86</ecNumber>
    </recommendedName>
    <alternativeName>
        <fullName evidence="1">Acetohydroxy-acid isomeroreductase</fullName>
        <shortName evidence="1">AHIR</shortName>
    </alternativeName>
    <alternativeName>
        <fullName evidence="1">Alpha-keto-beta-hydroxylacyl reductoisomerase</fullName>
    </alternativeName>
    <alternativeName>
        <fullName evidence="1">Ketol-acid reductoisomerase type 1</fullName>
    </alternativeName>
    <alternativeName>
        <fullName evidence="1">Ketol-acid reductoisomerase type I</fullName>
    </alternativeName>
</protein>
<sequence>MKIYYDKDCNMGVLKGKKVAIIGYGSQGHAHANNLKDSGIDVVVGLRADSASVKKATEAGLTVLPTSEAVKIADVVMILLPDETQGDIYREEIGPFLKQGAYLAFSHGFNIHFGQIVPRPDVNVIMIAPKGPGHLVRHEYTKGGGVPSLIAIHHDPAGNSRDVALAYASANGGGRAGIIETSFKEETETDLFGEQAVLCGGISALIQAGFETLVEAGYAPEMAYFECLHETKLIVDLIYEGGIANMRYSISNTAEYGDLTRGPRVVTDETKKEMKRILDEIQTGQFAKEWMLENKANKPVFTALRRKGAEHQIEEVGARLRSMMSWIGASKIVDKAKN</sequence>